<proteinExistence type="inferred from homology"/>
<organism>
    <name type="scientific">Vibrio atlanticus (strain LGP32)</name>
    <name type="common">Vibrio splendidus (strain Mel32)</name>
    <dbReference type="NCBI Taxonomy" id="575788"/>
    <lineage>
        <taxon>Bacteria</taxon>
        <taxon>Pseudomonadati</taxon>
        <taxon>Pseudomonadota</taxon>
        <taxon>Gammaproteobacteria</taxon>
        <taxon>Vibrionales</taxon>
        <taxon>Vibrionaceae</taxon>
        <taxon>Vibrio</taxon>
    </lineage>
</organism>
<gene>
    <name evidence="1" type="primary">metK</name>
    <name type="ordered locus">VS_2655</name>
</gene>
<evidence type="ECO:0000255" key="1">
    <source>
        <dbReference type="HAMAP-Rule" id="MF_00086"/>
    </source>
</evidence>
<accession>B7VKB3</accession>
<comment type="function">
    <text evidence="1">Catalyzes the formation of S-adenosylmethionine (AdoMet) from methionine and ATP. The overall synthetic reaction is composed of two sequential steps, AdoMet formation and the subsequent tripolyphosphate hydrolysis which occurs prior to release of AdoMet from the enzyme.</text>
</comment>
<comment type="catalytic activity">
    <reaction evidence="1">
        <text>L-methionine + ATP + H2O = S-adenosyl-L-methionine + phosphate + diphosphate</text>
        <dbReference type="Rhea" id="RHEA:21080"/>
        <dbReference type="ChEBI" id="CHEBI:15377"/>
        <dbReference type="ChEBI" id="CHEBI:30616"/>
        <dbReference type="ChEBI" id="CHEBI:33019"/>
        <dbReference type="ChEBI" id="CHEBI:43474"/>
        <dbReference type="ChEBI" id="CHEBI:57844"/>
        <dbReference type="ChEBI" id="CHEBI:59789"/>
        <dbReference type="EC" id="2.5.1.6"/>
    </reaction>
</comment>
<comment type="cofactor">
    <cofactor evidence="1">
        <name>Mg(2+)</name>
        <dbReference type="ChEBI" id="CHEBI:18420"/>
    </cofactor>
    <text evidence="1">Binds 2 divalent ions per subunit.</text>
</comment>
<comment type="cofactor">
    <cofactor evidence="1">
        <name>K(+)</name>
        <dbReference type="ChEBI" id="CHEBI:29103"/>
    </cofactor>
    <text evidence="1">Binds 1 potassium ion per subunit.</text>
</comment>
<comment type="pathway">
    <text evidence="1">Amino-acid biosynthesis; S-adenosyl-L-methionine biosynthesis; S-adenosyl-L-methionine from L-methionine: step 1/1.</text>
</comment>
<comment type="subunit">
    <text evidence="1">Homotetramer; dimer of dimers.</text>
</comment>
<comment type="subcellular location">
    <subcellularLocation>
        <location evidence="1">Cytoplasm</location>
    </subcellularLocation>
</comment>
<comment type="similarity">
    <text evidence="1">Belongs to the AdoMet synthase family.</text>
</comment>
<keyword id="KW-0067">ATP-binding</keyword>
<keyword id="KW-0963">Cytoplasm</keyword>
<keyword id="KW-0460">Magnesium</keyword>
<keyword id="KW-0479">Metal-binding</keyword>
<keyword id="KW-0547">Nucleotide-binding</keyword>
<keyword id="KW-0554">One-carbon metabolism</keyword>
<keyword id="KW-0630">Potassium</keyword>
<keyword id="KW-0808">Transferase</keyword>
<name>METK_VIBA3</name>
<dbReference type="EC" id="2.5.1.6" evidence="1"/>
<dbReference type="EMBL" id="FM954972">
    <property type="protein sequence ID" value="CAV19893.1"/>
    <property type="molecule type" value="Genomic_DNA"/>
</dbReference>
<dbReference type="SMR" id="B7VKB3"/>
<dbReference type="STRING" id="575788.VS_2655"/>
<dbReference type="KEGG" id="vsp:VS_2655"/>
<dbReference type="eggNOG" id="COG0192">
    <property type="taxonomic scope" value="Bacteria"/>
</dbReference>
<dbReference type="HOGENOM" id="CLU_041802_1_1_6"/>
<dbReference type="UniPathway" id="UPA00315">
    <property type="reaction ID" value="UER00080"/>
</dbReference>
<dbReference type="Proteomes" id="UP000009100">
    <property type="component" value="Chromosome 1"/>
</dbReference>
<dbReference type="GO" id="GO:0005737">
    <property type="term" value="C:cytoplasm"/>
    <property type="evidence" value="ECO:0007669"/>
    <property type="project" value="UniProtKB-SubCell"/>
</dbReference>
<dbReference type="GO" id="GO:0005524">
    <property type="term" value="F:ATP binding"/>
    <property type="evidence" value="ECO:0007669"/>
    <property type="project" value="UniProtKB-UniRule"/>
</dbReference>
<dbReference type="GO" id="GO:0000287">
    <property type="term" value="F:magnesium ion binding"/>
    <property type="evidence" value="ECO:0007669"/>
    <property type="project" value="UniProtKB-UniRule"/>
</dbReference>
<dbReference type="GO" id="GO:0004478">
    <property type="term" value="F:methionine adenosyltransferase activity"/>
    <property type="evidence" value="ECO:0007669"/>
    <property type="project" value="UniProtKB-UniRule"/>
</dbReference>
<dbReference type="GO" id="GO:0006730">
    <property type="term" value="P:one-carbon metabolic process"/>
    <property type="evidence" value="ECO:0007669"/>
    <property type="project" value="UniProtKB-KW"/>
</dbReference>
<dbReference type="GO" id="GO:0006556">
    <property type="term" value="P:S-adenosylmethionine biosynthetic process"/>
    <property type="evidence" value="ECO:0007669"/>
    <property type="project" value="UniProtKB-UniRule"/>
</dbReference>
<dbReference type="CDD" id="cd18079">
    <property type="entry name" value="S-AdoMet_synt"/>
    <property type="match status" value="1"/>
</dbReference>
<dbReference type="FunFam" id="3.30.300.10:FF:000001">
    <property type="entry name" value="S-adenosylmethionine synthase"/>
    <property type="match status" value="1"/>
</dbReference>
<dbReference type="FunFam" id="3.30.300.10:FF:000003">
    <property type="entry name" value="S-adenosylmethionine synthase"/>
    <property type="match status" value="1"/>
</dbReference>
<dbReference type="Gene3D" id="3.30.300.10">
    <property type="match status" value="3"/>
</dbReference>
<dbReference type="HAMAP" id="MF_00086">
    <property type="entry name" value="S_AdoMet_synth1"/>
    <property type="match status" value="1"/>
</dbReference>
<dbReference type="InterPro" id="IPR022631">
    <property type="entry name" value="ADOMET_SYNTHASE_CS"/>
</dbReference>
<dbReference type="InterPro" id="IPR022630">
    <property type="entry name" value="S-AdoMet_synt_C"/>
</dbReference>
<dbReference type="InterPro" id="IPR022629">
    <property type="entry name" value="S-AdoMet_synt_central"/>
</dbReference>
<dbReference type="InterPro" id="IPR022628">
    <property type="entry name" value="S-AdoMet_synt_N"/>
</dbReference>
<dbReference type="InterPro" id="IPR002133">
    <property type="entry name" value="S-AdoMet_synthetase"/>
</dbReference>
<dbReference type="InterPro" id="IPR022636">
    <property type="entry name" value="S-AdoMet_synthetase_sfam"/>
</dbReference>
<dbReference type="NCBIfam" id="TIGR01034">
    <property type="entry name" value="metK"/>
    <property type="match status" value="1"/>
</dbReference>
<dbReference type="PANTHER" id="PTHR11964">
    <property type="entry name" value="S-ADENOSYLMETHIONINE SYNTHETASE"/>
    <property type="match status" value="1"/>
</dbReference>
<dbReference type="Pfam" id="PF02773">
    <property type="entry name" value="S-AdoMet_synt_C"/>
    <property type="match status" value="1"/>
</dbReference>
<dbReference type="Pfam" id="PF02772">
    <property type="entry name" value="S-AdoMet_synt_M"/>
    <property type="match status" value="1"/>
</dbReference>
<dbReference type="Pfam" id="PF00438">
    <property type="entry name" value="S-AdoMet_synt_N"/>
    <property type="match status" value="1"/>
</dbReference>
<dbReference type="PIRSF" id="PIRSF000497">
    <property type="entry name" value="MAT"/>
    <property type="match status" value="1"/>
</dbReference>
<dbReference type="SUPFAM" id="SSF55973">
    <property type="entry name" value="S-adenosylmethionine synthetase"/>
    <property type="match status" value="3"/>
</dbReference>
<dbReference type="PROSITE" id="PS00376">
    <property type="entry name" value="ADOMET_SYNTHASE_1"/>
    <property type="match status" value="1"/>
</dbReference>
<dbReference type="PROSITE" id="PS00377">
    <property type="entry name" value="ADOMET_SYNTHASE_2"/>
    <property type="match status" value="1"/>
</dbReference>
<reference key="1">
    <citation type="submission" date="2009-02" db="EMBL/GenBank/DDBJ databases">
        <title>Vibrio splendidus str. LGP32 complete genome.</title>
        <authorList>
            <person name="Mazel D."/>
            <person name="Le Roux F."/>
        </authorList>
    </citation>
    <scope>NUCLEOTIDE SEQUENCE [LARGE SCALE GENOMIC DNA]</scope>
    <source>
        <strain>LGP32</strain>
    </source>
</reference>
<sequence>MAKHLFTSESVSEGHPDKIADQISDAVLDAIIEQDPKARVACETYVKTGMVMVGGEVTTSAWVDIEEITRETVREIGYVHSDMGFDADSCAVLNTIGKQSPDINQGVDKADPKDQGAGDQGIMFGYATNETPILMPAPITYSHLLVKKQAEVRKSGKLDFLRPDAKSQVTFQYDQGKIVGIDAVVLSTQHCDSVTTPDLREAVMEEIIKPVLPAEWINKDTNFFINPTGRFVIGGPMGDCGLTGRKIIVDTYGGAARHGGGAFSGKDPSKVDRSAAYAARYVAKNIVAAGMADRCEIQLSYAIGVADPTSIMVETFGTEKVAHEIIIEAVRQNFDLRPYGLQEMLNLLQPIYKQTAAYGHFGREEFPWEATDKAAILADFAGL</sequence>
<feature type="chain" id="PRO_1000196737" description="S-adenosylmethionine synthase">
    <location>
        <begin position="1"/>
        <end position="383"/>
    </location>
</feature>
<feature type="region of interest" description="Flexible loop" evidence="1">
    <location>
        <begin position="99"/>
        <end position="109"/>
    </location>
</feature>
<feature type="binding site" description="in other chain" evidence="1">
    <location>
        <position position="15"/>
    </location>
    <ligand>
        <name>ATP</name>
        <dbReference type="ChEBI" id="CHEBI:30616"/>
        <note>ligand shared between two neighboring subunits</note>
    </ligand>
</feature>
<feature type="binding site" evidence="1">
    <location>
        <position position="17"/>
    </location>
    <ligand>
        <name>Mg(2+)</name>
        <dbReference type="ChEBI" id="CHEBI:18420"/>
    </ligand>
</feature>
<feature type="binding site" evidence="1">
    <location>
        <position position="43"/>
    </location>
    <ligand>
        <name>K(+)</name>
        <dbReference type="ChEBI" id="CHEBI:29103"/>
    </ligand>
</feature>
<feature type="binding site" description="in other chain" evidence="1">
    <location>
        <position position="56"/>
    </location>
    <ligand>
        <name>L-methionine</name>
        <dbReference type="ChEBI" id="CHEBI:57844"/>
        <note>ligand shared between two neighboring subunits</note>
    </ligand>
</feature>
<feature type="binding site" description="in other chain" evidence="1">
    <location>
        <position position="99"/>
    </location>
    <ligand>
        <name>L-methionine</name>
        <dbReference type="ChEBI" id="CHEBI:57844"/>
        <note>ligand shared between two neighboring subunits</note>
    </ligand>
</feature>
<feature type="binding site" description="in other chain" evidence="1">
    <location>
        <begin position="164"/>
        <end position="166"/>
    </location>
    <ligand>
        <name>ATP</name>
        <dbReference type="ChEBI" id="CHEBI:30616"/>
        <note>ligand shared between two neighboring subunits</note>
    </ligand>
</feature>
<feature type="binding site" description="in other chain" evidence="1">
    <location>
        <begin position="230"/>
        <end position="231"/>
    </location>
    <ligand>
        <name>ATP</name>
        <dbReference type="ChEBI" id="CHEBI:30616"/>
        <note>ligand shared between two neighboring subunits</note>
    </ligand>
</feature>
<feature type="binding site" evidence="1">
    <location>
        <position position="239"/>
    </location>
    <ligand>
        <name>ATP</name>
        <dbReference type="ChEBI" id="CHEBI:30616"/>
        <note>ligand shared between two neighboring subunits</note>
    </ligand>
</feature>
<feature type="binding site" evidence="1">
    <location>
        <position position="239"/>
    </location>
    <ligand>
        <name>L-methionine</name>
        <dbReference type="ChEBI" id="CHEBI:57844"/>
        <note>ligand shared between two neighboring subunits</note>
    </ligand>
</feature>
<feature type="binding site" description="in other chain" evidence="1">
    <location>
        <begin position="245"/>
        <end position="246"/>
    </location>
    <ligand>
        <name>ATP</name>
        <dbReference type="ChEBI" id="CHEBI:30616"/>
        <note>ligand shared between two neighboring subunits</note>
    </ligand>
</feature>
<feature type="binding site" evidence="1">
    <location>
        <position position="262"/>
    </location>
    <ligand>
        <name>ATP</name>
        <dbReference type="ChEBI" id="CHEBI:30616"/>
        <note>ligand shared between two neighboring subunits</note>
    </ligand>
</feature>
<feature type="binding site" evidence="1">
    <location>
        <position position="266"/>
    </location>
    <ligand>
        <name>ATP</name>
        <dbReference type="ChEBI" id="CHEBI:30616"/>
        <note>ligand shared between two neighboring subunits</note>
    </ligand>
</feature>
<feature type="binding site" description="in other chain" evidence="1">
    <location>
        <position position="270"/>
    </location>
    <ligand>
        <name>L-methionine</name>
        <dbReference type="ChEBI" id="CHEBI:57844"/>
        <note>ligand shared between two neighboring subunits</note>
    </ligand>
</feature>
<protein>
    <recommendedName>
        <fullName evidence="1">S-adenosylmethionine synthase</fullName>
        <shortName evidence="1">AdoMet synthase</shortName>
        <ecNumber evidence="1">2.5.1.6</ecNumber>
    </recommendedName>
    <alternativeName>
        <fullName evidence="1">MAT</fullName>
    </alternativeName>
    <alternativeName>
        <fullName evidence="1">Methionine adenosyltransferase</fullName>
    </alternativeName>
</protein>